<dbReference type="EMBL" id="CP001403">
    <property type="protein sequence ID" value="ACP45785.1"/>
    <property type="molecule type" value="Genomic_DNA"/>
</dbReference>
<dbReference type="RefSeq" id="WP_012711513.1">
    <property type="nucleotide sequence ID" value="NC_012622.1"/>
</dbReference>
<dbReference type="SMR" id="C3NEP6"/>
<dbReference type="GeneID" id="84053119"/>
<dbReference type="KEGG" id="siy:YG5714_1523"/>
<dbReference type="HOGENOM" id="CLU_128576_0_0_2"/>
<dbReference type="Proteomes" id="UP000002308">
    <property type="component" value="Chromosome"/>
</dbReference>
<dbReference type="GO" id="GO:0009347">
    <property type="term" value="C:aspartate carbamoyltransferase complex"/>
    <property type="evidence" value="ECO:0007669"/>
    <property type="project" value="InterPro"/>
</dbReference>
<dbReference type="GO" id="GO:0046872">
    <property type="term" value="F:metal ion binding"/>
    <property type="evidence" value="ECO:0007669"/>
    <property type="project" value="UniProtKB-KW"/>
</dbReference>
<dbReference type="GO" id="GO:0006207">
    <property type="term" value="P:'de novo' pyrimidine nucleobase biosynthetic process"/>
    <property type="evidence" value="ECO:0007669"/>
    <property type="project" value="InterPro"/>
</dbReference>
<dbReference type="GO" id="GO:0006221">
    <property type="term" value="P:pyrimidine nucleotide biosynthetic process"/>
    <property type="evidence" value="ECO:0007669"/>
    <property type="project" value="UniProtKB-UniRule"/>
</dbReference>
<dbReference type="Gene3D" id="2.30.30.20">
    <property type="entry name" value="Aspartate carbamoyltransferase regulatory subunit, C-terminal domain"/>
    <property type="match status" value="1"/>
</dbReference>
<dbReference type="Gene3D" id="3.30.70.140">
    <property type="entry name" value="Aspartate carbamoyltransferase regulatory subunit, N-terminal domain"/>
    <property type="match status" value="1"/>
</dbReference>
<dbReference type="HAMAP" id="MF_00002">
    <property type="entry name" value="Asp_carb_tr_reg"/>
    <property type="match status" value="1"/>
</dbReference>
<dbReference type="InterPro" id="IPR020545">
    <property type="entry name" value="Asp_carbamoyltransf_reg_N"/>
</dbReference>
<dbReference type="InterPro" id="IPR002801">
    <property type="entry name" value="Asp_carbamoylTrfase_reg"/>
</dbReference>
<dbReference type="InterPro" id="IPR020542">
    <property type="entry name" value="Asp_carbamoyltrfase_reg_C"/>
</dbReference>
<dbReference type="InterPro" id="IPR036792">
    <property type="entry name" value="Asp_carbatrfase_reg_C_sf"/>
</dbReference>
<dbReference type="InterPro" id="IPR036793">
    <property type="entry name" value="Asp_carbatrfase_reg_N_sf"/>
</dbReference>
<dbReference type="NCBIfam" id="TIGR00240">
    <property type="entry name" value="ATCase_reg"/>
    <property type="match status" value="1"/>
</dbReference>
<dbReference type="PANTHER" id="PTHR35805">
    <property type="entry name" value="ASPARTATE CARBAMOYLTRANSFERASE REGULATORY CHAIN"/>
    <property type="match status" value="1"/>
</dbReference>
<dbReference type="PANTHER" id="PTHR35805:SF1">
    <property type="entry name" value="ASPARTATE CARBAMOYLTRANSFERASE REGULATORY CHAIN"/>
    <property type="match status" value="1"/>
</dbReference>
<dbReference type="Pfam" id="PF01948">
    <property type="entry name" value="PyrI"/>
    <property type="match status" value="1"/>
</dbReference>
<dbReference type="Pfam" id="PF02748">
    <property type="entry name" value="PyrI_C"/>
    <property type="match status" value="1"/>
</dbReference>
<dbReference type="SUPFAM" id="SSF57825">
    <property type="entry name" value="Aspartate carbamoyltransferase, Regulatory-chain, C-terminal domain"/>
    <property type="match status" value="1"/>
</dbReference>
<dbReference type="SUPFAM" id="SSF54893">
    <property type="entry name" value="Aspartate carbamoyltransferase, Regulatory-chain, N-terminal domain"/>
    <property type="match status" value="1"/>
</dbReference>
<feature type="chain" id="PRO_1000201619" description="Aspartate carbamoyltransferase regulatory chain">
    <location>
        <begin position="1"/>
        <end position="159"/>
    </location>
</feature>
<feature type="binding site" evidence="1">
    <location>
        <position position="113"/>
    </location>
    <ligand>
        <name>Zn(2+)</name>
        <dbReference type="ChEBI" id="CHEBI:29105"/>
    </ligand>
</feature>
<feature type="binding site" evidence="1">
    <location>
        <position position="118"/>
    </location>
    <ligand>
        <name>Zn(2+)</name>
        <dbReference type="ChEBI" id="CHEBI:29105"/>
    </ligand>
</feature>
<feature type="binding site" evidence="1">
    <location>
        <position position="142"/>
    </location>
    <ligand>
        <name>Zn(2+)</name>
        <dbReference type="ChEBI" id="CHEBI:29105"/>
    </ligand>
</feature>
<feature type="binding site" evidence="1">
    <location>
        <position position="145"/>
    </location>
    <ligand>
        <name>Zn(2+)</name>
        <dbReference type="ChEBI" id="CHEBI:29105"/>
    </ligand>
</feature>
<organism>
    <name type="scientific">Saccharolobus islandicus (strain Y.G.57.14 / Yellowstone #1)</name>
    <name type="common">Sulfolobus islandicus</name>
    <dbReference type="NCBI Taxonomy" id="439386"/>
    <lineage>
        <taxon>Archaea</taxon>
        <taxon>Thermoproteota</taxon>
        <taxon>Thermoprotei</taxon>
        <taxon>Sulfolobales</taxon>
        <taxon>Sulfolobaceae</taxon>
        <taxon>Saccharolobus</taxon>
    </lineage>
</organism>
<reference key="1">
    <citation type="journal article" date="2009" name="Proc. Natl. Acad. Sci. U.S.A.">
        <title>Biogeography of the Sulfolobus islandicus pan-genome.</title>
        <authorList>
            <person name="Reno M.L."/>
            <person name="Held N.L."/>
            <person name="Fields C.J."/>
            <person name="Burke P.V."/>
            <person name="Whitaker R.J."/>
        </authorList>
    </citation>
    <scope>NUCLEOTIDE SEQUENCE [LARGE SCALE GENOMIC DNA]</scope>
    <source>
        <strain>Y.G.57.14 / Yellowstone #1</strain>
    </source>
</reference>
<evidence type="ECO:0000255" key="1">
    <source>
        <dbReference type="HAMAP-Rule" id="MF_00002"/>
    </source>
</evidence>
<accession>C3NEP6</accession>
<name>PYRI_SACI7</name>
<protein>
    <recommendedName>
        <fullName evidence="1">Aspartate carbamoyltransferase regulatory chain</fullName>
    </recommendedName>
</protein>
<comment type="function">
    <text evidence="1">Involved in allosteric regulation of aspartate carbamoyltransferase.</text>
</comment>
<comment type="cofactor">
    <cofactor evidence="1">
        <name>Zn(2+)</name>
        <dbReference type="ChEBI" id="CHEBI:29105"/>
    </cofactor>
    <text evidence="1">Binds 1 zinc ion per subunit.</text>
</comment>
<comment type="subunit">
    <text evidence="1">Contains catalytic and regulatory chains.</text>
</comment>
<comment type="similarity">
    <text evidence="1">Belongs to the PyrI family.</text>
</comment>
<sequence>MISSSKRDELIVSKIRKGTVIDHIPAGRALAVLRILGIRGSEGYRVALVMNVESKKIGRKDIVKIEDRVIDEKEASLITLIAPSATINIIRDYVVTEKRHLEVPKQIRGLIKCPNPQCITNNDVEAESRFTTISIKPLKLKCEYCEIYITEEDVIRQIL</sequence>
<proteinExistence type="inferred from homology"/>
<keyword id="KW-0479">Metal-binding</keyword>
<keyword id="KW-0665">Pyrimidine biosynthesis</keyword>
<keyword id="KW-0862">Zinc</keyword>
<gene>
    <name evidence="1" type="primary">pyrI</name>
    <name type="ordered locus">YG5714_1523</name>
</gene>